<protein>
    <recommendedName>
        <fullName evidence="1">Putative hydro-lyase BB2997</fullName>
        <ecNumber evidence="1">4.2.1.-</ecNumber>
    </recommendedName>
</protein>
<organism>
    <name type="scientific">Bordetella bronchiseptica (strain ATCC BAA-588 / NCTC 13252 / RB50)</name>
    <name type="common">Alcaligenes bronchisepticus</name>
    <dbReference type="NCBI Taxonomy" id="257310"/>
    <lineage>
        <taxon>Bacteria</taxon>
        <taxon>Pseudomonadati</taxon>
        <taxon>Pseudomonadota</taxon>
        <taxon>Betaproteobacteria</taxon>
        <taxon>Burkholderiales</taxon>
        <taxon>Alcaligenaceae</taxon>
        <taxon>Bordetella</taxon>
    </lineage>
</organism>
<proteinExistence type="inferred from homology"/>
<sequence length="277" mass="29830">MRRPVPYHRVAAIMTILSLAGAGHQARLDARGGMLTGPTANLAPGHVQANLAILPQAVAGDFLRFCQRNPKPCPLLAVSEPGDPSLPELGLDIDIRTDVPRYRVWRDGKLVDEPLDVRGLWRDDLVAFLIGCSFSFEEAMLENGLPVRHIEQGCNVPMYRTNIATHPAGPFSGPLVVSMRPLKAADAIRAIQVTSRFPSVHGAPVHLGDPALIGIADLGRPDYGDAVEIRAGEIPVFWACGVTPQSVVAAVRPEFCITHAPGHMLVTDLLNSRLAAF</sequence>
<evidence type="ECO:0000255" key="1">
    <source>
        <dbReference type="HAMAP-Rule" id="MF_01830"/>
    </source>
</evidence>
<reference key="1">
    <citation type="journal article" date="2003" name="Nat. Genet.">
        <title>Comparative analysis of the genome sequences of Bordetella pertussis, Bordetella parapertussis and Bordetella bronchiseptica.</title>
        <authorList>
            <person name="Parkhill J."/>
            <person name="Sebaihia M."/>
            <person name="Preston A."/>
            <person name="Murphy L.D."/>
            <person name="Thomson N.R."/>
            <person name="Harris D.E."/>
            <person name="Holden M.T.G."/>
            <person name="Churcher C.M."/>
            <person name="Bentley S.D."/>
            <person name="Mungall K.L."/>
            <person name="Cerdeno-Tarraga A.-M."/>
            <person name="Temple L."/>
            <person name="James K.D."/>
            <person name="Harris B."/>
            <person name="Quail M.A."/>
            <person name="Achtman M."/>
            <person name="Atkin R."/>
            <person name="Baker S."/>
            <person name="Basham D."/>
            <person name="Bason N."/>
            <person name="Cherevach I."/>
            <person name="Chillingworth T."/>
            <person name="Collins M."/>
            <person name="Cronin A."/>
            <person name="Davis P."/>
            <person name="Doggett J."/>
            <person name="Feltwell T."/>
            <person name="Goble A."/>
            <person name="Hamlin N."/>
            <person name="Hauser H."/>
            <person name="Holroyd S."/>
            <person name="Jagels K."/>
            <person name="Leather S."/>
            <person name="Moule S."/>
            <person name="Norberczak H."/>
            <person name="O'Neil S."/>
            <person name="Ormond D."/>
            <person name="Price C."/>
            <person name="Rabbinowitsch E."/>
            <person name="Rutter S."/>
            <person name="Sanders M."/>
            <person name="Saunders D."/>
            <person name="Seeger K."/>
            <person name="Sharp S."/>
            <person name="Simmonds M."/>
            <person name="Skelton J."/>
            <person name="Squares R."/>
            <person name="Squares S."/>
            <person name="Stevens K."/>
            <person name="Unwin L."/>
            <person name="Whitehead S."/>
            <person name="Barrell B.G."/>
            <person name="Maskell D.J."/>
        </authorList>
    </citation>
    <scope>NUCLEOTIDE SEQUENCE [LARGE SCALE GENOMIC DNA]</scope>
    <source>
        <strain>ATCC BAA-588 / NCTC 13252 / RB50</strain>
    </source>
</reference>
<keyword id="KW-0456">Lyase</keyword>
<accession>Q7WI59</accession>
<name>Y2997_BORBR</name>
<feature type="chain" id="PRO_0000217162" description="Putative hydro-lyase BB2997">
    <location>
        <begin position="1"/>
        <end position="277"/>
    </location>
</feature>
<gene>
    <name type="ordered locus">BB2997</name>
</gene>
<dbReference type="EC" id="4.2.1.-" evidence="1"/>
<dbReference type="EMBL" id="BX640446">
    <property type="protein sequence ID" value="CAE33489.1"/>
    <property type="molecule type" value="Genomic_DNA"/>
</dbReference>
<dbReference type="SMR" id="Q7WI59"/>
<dbReference type="KEGG" id="bbr:BB2997"/>
<dbReference type="eggNOG" id="COG4336">
    <property type="taxonomic scope" value="Bacteria"/>
</dbReference>
<dbReference type="HOGENOM" id="CLU_059759_0_0_4"/>
<dbReference type="Proteomes" id="UP000001027">
    <property type="component" value="Chromosome"/>
</dbReference>
<dbReference type="GO" id="GO:0016829">
    <property type="term" value="F:lyase activity"/>
    <property type="evidence" value="ECO:0007669"/>
    <property type="project" value="UniProtKB-KW"/>
</dbReference>
<dbReference type="FunFam" id="3.30.2040.10:FF:000001">
    <property type="entry name" value="D-glutamate cyclase, mitochondrial"/>
    <property type="match status" value="1"/>
</dbReference>
<dbReference type="Gene3D" id="3.40.1640.10">
    <property type="entry name" value="PSTPO5379-like"/>
    <property type="match status" value="1"/>
</dbReference>
<dbReference type="Gene3D" id="3.30.2040.10">
    <property type="entry name" value="PSTPO5379-like domain"/>
    <property type="match status" value="1"/>
</dbReference>
<dbReference type="HAMAP" id="MF_01830">
    <property type="entry name" value="Hydro_lyase"/>
    <property type="match status" value="1"/>
</dbReference>
<dbReference type="InterPro" id="IPR009906">
    <property type="entry name" value="D-Glu_cyclase"/>
</dbReference>
<dbReference type="InterPro" id="IPR038021">
    <property type="entry name" value="Putative_hydro-lyase"/>
</dbReference>
<dbReference type="InterPro" id="IPR016938">
    <property type="entry name" value="UPF0317"/>
</dbReference>
<dbReference type="NCBIfam" id="NF003969">
    <property type="entry name" value="PRK05463.1"/>
    <property type="match status" value="1"/>
</dbReference>
<dbReference type="PANTHER" id="PTHR32022">
    <property type="entry name" value="D-GLUTAMATE CYCLASE, MITOCHONDRIAL"/>
    <property type="match status" value="1"/>
</dbReference>
<dbReference type="PANTHER" id="PTHR32022:SF10">
    <property type="entry name" value="D-GLUTAMATE CYCLASE, MITOCHONDRIAL"/>
    <property type="match status" value="1"/>
</dbReference>
<dbReference type="Pfam" id="PF07286">
    <property type="entry name" value="D-Glu_cyclase"/>
    <property type="match status" value="1"/>
</dbReference>
<dbReference type="PIRSF" id="PIRSF029755">
    <property type="entry name" value="UCP029755"/>
    <property type="match status" value="1"/>
</dbReference>
<dbReference type="SUPFAM" id="SSF160920">
    <property type="entry name" value="PSTPO5379-like"/>
    <property type="match status" value="1"/>
</dbReference>
<comment type="similarity">
    <text evidence="1">Belongs to the D-glutamate cyclase family.</text>
</comment>